<sequence length="101" mass="10713">MAAISREEVAHLARLSRLAVTEEELDTLAGQLDVILQAVAQVGEVTAADIPPTSHSVPLTNVLRDDVVASCLTPEEALSGAPDAAEQRFRVPRILDEDVAS</sequence>
<accession>A4X489</accession>
<dbReference type="EC" id="6.3.5.-" evidence="1"/>
<dbReference type="EMBL" id="CP000667">
    <property type="protein sequence ID" value="ABP53689.1"/>
    <property type="molecule type" value="Genomic_DNA"/>
</dbReference>
<dbReference type="RefSeq" id="WP_011905121.1">
    <property type="nucleotide sequence ID" value="NC_009380.1"/>
</dbReference>
<dbReference type="SMR" id="A4X489"/>
<dbReference type="STRING" id="369723.Strop_1219"/>
<dbReference type="KEGG" id="stp:Strop_1219"/>
<dbReference type="PATRIC" id="fig|369723.5.peg.1242"/>
<dbReference type="eggNOG" id="COG0721">
    <property type="taxonomic scope" value="Bacteria"/>
</dbReference>
<dbReference type="HOGENOM" id="CLU_105899_1_0_11"/>
<dbReference type="Proteomes" id="UP000000235">
    <property type="component" value="Chromosome"/>
</dbReference>
<dbReference type="GO" id="GO:0050566">
    <property type="term" value="F:asparaginyl-tRNA synthase (glutamine-hydrolyzing) activity"/>
    <property type="evidence" value="ECO:0007669"/>
    <property type="project" value="RHEA"/>
</dbReference>
<dbReference type="GO" id="GO:0005524">
    <property type="term" value="F:ATP binding"/>
    <property type="evidence" value="ECO:0007669"/>
    <property type="project" value="UniProtKB-KW"/>
</dbReference>
<dbReference type="GO" id="GO:0050567">
    <property type="term" value="F:glutaminyl-tRNA synthase (glutamine-hydrolyzing) activity"/>
    <property type="evidence" value="ECO:0007669"/>
    <property type="project" value="UniProtKB-UniRule"/>
</dbReference>
<dbReference type="GO" id="GO:0070681">
    <property type="term" value="P:glutaminyl-tRNAGln biosynthesis via transamidation"/>
    <property type="evidence" value="ECO:0007669"/>
    <property type="project" value="TreeGrafter"/>
</dbReference>
<dbReference type="GO" id="GO:0006450">
    <property type="term" value="P:regulation of translational fidelity"/>
    <property type="evidence" value="ECO:0007669"/>
    <property type="project" value="InterPro"/>
</dbReference>
<dbReference type="GO" id="GO:0006412">
    <property type="term" value="P:translation"/>
    <property type="evidence" value="ECO:0007669"/>
    <property type="project" value="UniProtKB-UniRule"/>
</dbReference>
<dbReference type="Gene3D" id="1.10.20.60">
    <property type="entry name" value="Glu-tRNAGln amidotransferase C subunit, N-terminal domain"/>
    <property type="match status" value="1"/>
</dbReference>
<dbReference type="HAMAP" id="MF_00122">
    <property type="entry name" value="GatC"/>
    <property type="match status" value="1"/>
</dbReference>
<dbReference type="InterPro" id="IPR036113">
    <property type="entry name" value="Asp/Glu-ADT_sf_sub_c"/>
</dbReference>
<dbReference type="InterPro" id="IPR003837">
    <property type="entry name" value="GatC"/>
</dbReference>
<dbReference type="NCBIfam" id="TIGR00135">
    <property type="entry name" value="gatC"/>
    <property type="match status" value="1"/>
</dbReference>
<dbReference type="PANTHER" id="PTHR15004">
    <property type="entry name" value="GLUTAMYL-TRNA(GLN) AMIDOTRANSFERASE SUBUNIT C, MITOCHONDRIAL"/>
    <property type="match status" value="1"/>
</dbReference>
<dbReference type="PANTHER" id="PTHR15004:SF0">
    <property type="entry name" value="GLUTAMYL-TRNA(GLN) AMIDOTRANSFERASE SUBUNIT C, MITOCHONDRIAL"/>
    <property type="match status" value="1"/>
</dbReference>
<dbReference type="Pfam" id="PF02686">
    <property type="entry name" value="GatC"/>
    <property type="match status" value="1"/>
</dbReference>
<dbReference type="SUPFAM" id="SSF141000">
    <property type="entry name" value="Glu-tRNAGln amidotransferase C subunit"/>
    <property type="match status" value="1"/>
</dbReference>
<organism>
    <name type="scientific">Salinispora tropica (strain ATCC BAA-916 / DSM 44818 / JCM 13857 / NBRC 105044 / CNB-440)</name>
    <dbReference type="NCBI Taxonomy" id="369723"/>
    <lineage>
        <taxon>Bacteria</taxon>
        <taxon>Bacillati</taxon>
        <taxon>Actinomycetota</taxon>
        <taxon>Actinomycetes</taxon>
        <taxon>Micromonosporales</taxon>
        <taxon>Micromonosporaceae</taxon>
        <taxon>Salinispora</taxon>
    </lineage>
</organism>
<feature type="chain" id="PRO_1000076196" description="Aspartyl/glutamyl-tRNA(Asn/Gln) amidotransferase subunit C">
    <location>
        <begin position="1"/>
        <end position="101"/>
    </location>
</feature>
<reference key="1">
    <citation type="journal article" date="2007" name="Proc. Natl. Acad. Sci. U.S.A.">
        <title>Genome sequencing reveals complex secondary metabolome in the marine actinomycete Salinispora tropica.</title>
        <authorList>
            <person name="Udwary D.W."/>
            <person name="Zeigler L."/>
            <person name="Asolkar R.N."/>
            <person name="Singan V."/>
            <person name="Lapidus A."/>
            <person name="Fenical W."/>
            <person name="Jensen P.R."/>
            <person name="Moore B.S."/>
        </authorList>
    </citation>
    <scope>NUCLEOTIDE SEQUENCE [LARGE SCALE GENOMIC DNA]</scope>
    <source>
        <strain>ATCC BAA-916 / DSM 44818 / JCM 13857 / NBRC 105044 / CNB-440</strain>
    </source>
</reference>
<protein>
    <recommendedName>
        <fullName evidence="1">Aspartyl/glutamyl-tRNA(Asn/Gln) amidotransferase subunit C</fullName>
        <shortName evidence="1">Asp/Glu-ADT subunit C</shortName>
        <ecNumber evidence="1">6.3.5.-</ecNumber>
    </recommendedName>
</protein>
<proteinExistence type="inferred from homology"/>
<evidence type="ECO:0000255" key="1">
    <source>
        <dbReference type="HAMAP-Rule" id="MF_00122"/>
    </source>
</evidence>
<keyword id="KW-0067">ATP-binding</keyword>
<keyword id="KW-0436">Ligase</keyword>
<keyword id="KW-0547">Nucleotide-binding</keyword>
<keyword id="KW-0648">Protein biosynthesis</keyword>
<keyword id="KW-1185">Reference proteome</keyword>
<comment type="function">
    <text evidence="1">Allows the formation of correctly charged Asn-tRNA(Asn) or Gln-tRNA(Gln) through the transamidation of misacylated Asp-tRNA(Asn) or Glu-tRNA(Gln) in organisms which lack either or both of asparaginyl-tRNA or glutaminyl-tRNA synthetases. The reaction takes place in the presence of glutamine and ATP through an activated phospho-Asp-tRNA(Asn) or phospho-Glu-tRNA(Gln).</text>
</comment>
<comment type="catalytic activity">
    <reaction evidence="1">
        <text>L-glutamyl-tRNA(Gln) + L-glutamine + ATP + H2O = L-glutaminyl-tRNA(Gln) + L-glutamate + ADP + phosphate + H(+)</text>
        <dbReference type="Rhea" id="RHEA:17521"/>
        <dbReference type="Rhea" id="RHEA-COMP:9681"/>
        <dbReference type="Rhea" id="RHEA-COMP:9684"/>
        <dbReference type="ChEBI" id="CHEBI:15377"/>
        <dbReference type="ChEBI" id="CHEBI:15378"/>
        <dbReference type="ChEBI" id="CHEBI:29985"/>
        <dbReference type="ChEBI" id="CHEBI:30616"/>
        <dbReference type="ChEBI" id="CHEBI:43474"/>
        <dbReference type="ChEBI" id="CHEBI:58359"/>
        <dbReference type="ChEBI" id="CHEBI:78520"/>
        <dbReference type="ChEBI" id="CHEBI:78521"/>
        <dbReference type="ChEBI" id="CHEBI:456216"/>
    </reaction>
</comment>
<comment type="catalytic activity">
    <reaction evidence="1">
        <text>L-aspartyl-tRNA(Asn) + L-glutamine + ATP + H2O = L-asparaginyl-tRNA(Asn) + L-glutamate + ADP + phosphate + 2 H(+)</text>
        <dbReference type="Rhea" id="RHEA:14513"/>
        <dbReference type="Rhea" id="RHEA-COMP:9674"/>
        <dbReference type="Rhea" id="RHEA-COMP:9677"/>
        <dbReference type="ChEBI" id="CHEBI:15377"/>
        <dbReference type="ChEBI" id="CHEBI:15378"/>
        <dbReference type="ChEBI" id="CHEBI:29985"/>
        <dbReference type="ChEBI" id="CHEBI:30616"/>
        <dbReference type="ChEBI" id="CHEBI:43474"/>
        <dbReference type="ChEBI" id="CHEBI:58359"/>
        <dbReference type="ChEBI" id="CHEBI:78515"/>
        <dbReference type="ChEBI" id="CHEBI:78516"/>
        <dbReference type="ChEBI" id="CHEBI:456216"/>
    </reaction>
</comment>
<comment type="subunit">
    <text evidence="1">Heterotrimer of A, B and C subunits.</text>
</comment>
<comment type="similarity">
    <text evidence="1">Belongs to the GatC family.</text>
</comment>
<name>GATC_SALTO</name>
<gene>
    <name evidence="1" type="primary">gatC</name>
    <name type="ordered locus">Strop_1219</name>
</gene>